<reference key="1">
    <citation type="journal article" date="1994" name="DNA Res.">
        <title>Prediction of the coding sequences of unidentified human genes. I. The coding sequences of 40 new genes (KIAA0001-KIAA0040) deduced by analysis of randomly sampled cDNA clones from human immature myeloid cell line KG-1.</title>
        <authorList>
            <person name="Nomura N."/>
            <person name="Miyajima N."/>
            <person name="Sazuka T."/>
            <person name="Tanaka A."/>
            <person name="Kawarabayasi Y."/>
            <person name="Sato S."/>
            <person name="Nagase T."/>
            <person name="Seki N."/>
            <person name="Ishikawa K."/>
            <person name="Tabata S."/>
        </authorList>
    </citation>
    <scope>NUCLEOTIDE SEQUENCE [LARGE SCALE MRNA] (ISOFORM 1)</scope>
    <source>
        <tissue>Bone marrow</tissue>
    </source>
</reference>
<reference key="2">
    <citation type="journal article" date="2004" name="Nat. Genet.">
        <title>Complete sequencing and characterization of 21,243 full-length human cDNAs.</title>
        <authorList>
            <person name="Ota T."/>
            <person name="Suzuki Y."/>
            <person name="Nishikawa T."/>
            <person name="Otsuki T."/>
            <person name="Sugiyama T."/>
            <person name="Irie R."/>
            <person name="Wakamatsu A."/>
            <person name="Hayashi K."/>
            <person name="Sato H."/>
            <person name="Nagai K."/>
            <person name="Kimura K."/>
            <person name="Makita H."/>
            <person name="Sekine M."/>
            <person name="Obayashi M."/>
            <person name="Nishi T."/>
            <person name="Shibahara T."/>
            <person name="Tanaka T."/>
            <person name="Ishii S."/>
            <person name="Yamamoto J."/>
            <person name="Saito K."/>
            <person name="Kawai Y."/>
            <person name="Isono Y."/>
            <person name="Nakamura Y."/>
            <person name="Nagahari K."/>
            <person name="Murakami K."/>
            <person name="Yasuda T."/>
            <person name="Iwayanagi T."/>
            <person name="Wagatsuma M."/>
            <person name="Shiratori A."/>
            <person name="Sudo H."/>
            <person name="Hosoiri T."/>
            <person name="Kaku Y."/>
            <person name="Kodaira H."/>
            <person name="Kondo H."/>
            <person name="Sugawara M."/>
            <person name="Takahashi M."/>
            <person name="Kanda K."/>
            <person name="Yokoi T."/>
            <person name="Furuya T."/>
            <person name="Kikkawa E."/>
            <person name="Omura Y."/>
            <person name="Abe K."/>
            <person name="Kamihara K."/>
            <person name="Katsuta N."/>
            <person name="Sato K."/>
            <person name="Tanikawa M."/>
            <person name="Yamazaki M."/>
            <person name="Ninomiya K."/>
            <person name="Ishibashi T."/>
            <person name="Yamashita H."/>
            <person name="Murakawa K."/>
            <person name="Fujimori K."/>
            <person name="Tanai H."/>
            <person name="Kimata M."/>
            <person name="Watanabe M."/>
            <person name="Hiraoka S."/>
            <person name="Chiba Y."/>
            <person name="Ishida S."/>
            <person name="Ono Y."/>
            <person name="Takiguchi S."/>
            <person name="Watanabe S."/>
            <person name="Yosida M."/>
            <person name="Hotuta T."/>
            <person name="Kusano J."/>
            <person name="Kanehori K."/>
            <person name="Takahashi-Fujii A."/>
            <person name="Hara H."/>
            <person name="Tanase T.-O."/>
            <person name="Nomura Y."/>
            <person name="Togiya S."/>
            <person name="Komai F."/>
            <person name="Hara R."/>
            <person name="Takeuchi K."/>
            <person name="Arita M."/>
            <person name="Imose N."/>
            <person name="Musashino K."/>
            <person name="Yuuki H."/>
            <person name="Oshima A."/>
            <person name="Sasaki N."/>
            <person name="Aotsuka S."/>
            <person name="Yoshikawa Y."/>
            <person name="Matsunawa H."/>
            <person name="Ichihara T."/>
            <person name="Shiohata N."/>
            <person name="Sano S."/>
            <person name="Moriya S."/>
            <person name="Momiyama H."/>
            <person name="Satoh N."/>
            <person name="Takami S."/>
            <person name="Terashima Y."/>
            <person name="Suzuki O."/>
            <person name="Nakagawa S."/>
            <person name="Senoh A."/>
            <person name="Mizoguchi H."/>
            <person name="Goto Y."/>
            <person name="Shimizu F."/>
            <person name="Wakebe H."/>
            <person name="Hishigaki H."/>
            <person name="Watanabe T."/>
            <person name="Sugiyama A."/>
            <person name="Takemoto M."/>
            <person name="Kawakami B."/>
            <person name="Yamazaki M."/>
            <person name="Watanabe K."/>
            <person name="Kumagai A."/>
            <person name="Itakura S."/>
            <person name="Fukuzumi Y."/>
            <person name="Fujimori Y."/>
            <person name="Komiyama M."/>
            <person name="Tashiro H."/>
            <person name="Tanigami A."/>
            <person name="Fujiwara T."/>
            <person name="Ono T."/>
            <person name="Yamada K."/>
            <person name="Fujii Y."/>
            <person name="Ozaki K."/>
            <person name="Hirao M."/>
            <person name="Ohmori Y."/>
            <person name="Kawabata A."/>
            <person name="Hikiji T."/>
            <person name="Kobatake N."/>
            <person name="Inagaki H."/>
            <person name="Ikema Y."/>
            <person name="Okamoto S."/>
            <person name="Okitani R."/>
            <person name="Kawakami T."/>
            <person name="Noguchi S."/>
            <person name="Itoh T."/>
            <person name="Shigeta K."/>
            <person name="Senba T."/>
            <person name="Matsumura K."/>
            <person name="Nakajima Y."/>
            <person name="Mizuno T."/>
            <person name="Morinaga M."/>
            <person name="Sasaki M."/>
            <person name="Togashi T."/>
            <person name="Oyama M."/>
            <person name="Hata H."/>
            <person name="Watanabe M."/>
            <person name="Komatsu T."/>
            <person name="Mizushima-Sugano J."/>
            <person name="Satoh T."/>
            <person name="Shirai Y."/>
            <person name="Takahashi Y."/>
            <person name="Nakagawa K."/>
            <person name="Okumura K."/>
            <person name="Nagase T."/>
            <person name="Nomura N."/>
            <person name="Kikuchi H."/>
            <person name="Masuho Y."/>
            <person name="Yamashita R."/>
            <person name="Nakai K."/>
            <person name="Yada T."/>
            <person name="Nakamura Y."/>
            <person name="Ohara O."/>
            <person name="Isogai T."/>
            <person name="Sugano S."/>
        </authorList>
    </citation>
    <scope>NUCLEOTIDE SEQUENCE [LARGE SCALE MRNA] (ISOFORM 1)</scope>
    <source>
        <tissue>Hippocampus</tissue>
    </source>
</reference>
<reference key="3">
    <citation type="journal article" date="2005" name="Nature">
        <title>Generation and annotation of the DNA sequences of human chromosomes 2 and 4.</title>
        <authorList>
            <person name="Hillier L.W."/>
            <person name="Graves T.A."/>
            <person name="Fulton R.S."/>
            <person name="Fulton L.A."/>
            <person name="Pepin K.H."/>
            <person name="Minx P."/>
            <person name="Wagner-McPherson C."/>
            <person name="Layman D."/>
            <person name="Wylie K."/>
            <person name="Sekhon M."/>
            <person name="Becker M.C."/>
            <person name="Fewell G.A."/>
            <person name="Delehaunty K.D."/>
            <person name="Miner T.L."/>
            <person name="Nash W.E."/>
            <person name="Kremitzki C."/>
            <person name="Oddy L."/>
            <person name="Du H."/>
            <person name="Sun H."/>
            <person name="Bradshaw-Cordum H."/>
            <person name="Ali J."/>
            <person name="Carter J."/>
            <person name="Cordes M."/>
            <person name="Harris A."/>
            <person name="Isak A."/>
            <person name="van Brunt A."/>
            <person name="Nguyen C."/>
            <person name="Du F."/>
            <person name="Courtney L."/>
            <person name="Kalicki J."/>
            <person name="Ozersky P."/>
            <person name="Abbott S."/>
            <person name="Armstrong J."/>
            <person name="Belter E.A."/>
            <person name="Caruso L."/>
            <person name="Cedroni M."/>
            <person name="Cotton M."/>
            <person name="Davidson T."/>
            <person name="Desai A."/>
            <person name="Elliott G."/>
            <person name="Erb T."/>
            <person name="Fronick C."/>
            <person name="Gaige T."/>
            <person name="Haakenson W."/>
            <person name="Haglund K."/>
            <person name="Holmes A."/>
            <person name="Harkins R."/>
            <person name="Kim K."/>
            <person name="Kruchowski S.S."/>
            <person name="Strong C.M."/>
            <person name="Grewal N."/>
            <person name="Goyea E."/>
            <person name="Hou S."/>
            <person name="Levy A."/>
            <person name="Martinka S."/>
            <person name="Mead K."/>
            <person name="McLellan M.D."/>
            <person name="Meyer R."/>
            <person name="Randall-Maher J."/>
            <person name="Tomlinson C."/>
            <person name="Dauphin-Kohlberg S."/>
            <person name="Kozlowicz-Reilly A."/>
            <person name="Shah N."/>
            <person name="Swearengen-Shahid S."/>
            <person name="Snider J."/>
            <person name="Strong J.T."/>
            <person name="Thompson J."/>
            <person name="Yoakum M."/>
            <person name="Leonard S."/>
            <person name="Pearman C."/>
            <person name="Trani L."/>
            <person name="Radionenko M."/>
            <person name="Waligorski J.E."/>
            <person name="Wang C."/>
            <person name="Rock S.M."/>
            <person name="Tin-Wollam A.-M."/>
            <person name="Maupin R."/>
            <person name="Latreille P."/>
            <person name="Wendl M.C."/>
            <person name="Yang S.-P."/>
            <person name="Pohl C."/>
            <person name="Wallis J.W."/>
            <person name="Spieth J."/>
            <person name="Bieri T.A."/>
            <person name="Berkowicz N."/>
            <person name="Nelson J.O."/>
            <person name="Osborne J."/>
            <person name="Ding L."/>
            <person name="Meyer R."/>
            <person name="Sabo A."/>
            <person name="Shotland Y."/>
            <person name="Sinha P."/>
            <person name="Wohldmann P.E."/>
            <person name="Cook L.L."/>
            <person name="Hickenbotham M.T."/>
            <person name="Eldred J."/>
            <person name="Williams D."/>
            <person name="Jones T.A."/>
            <person name="She X."/>
            <person name="Ciccarelli F.D."/>
            <person name="Izaurralde E."/>
            <person name="Taylor J."/>
            <person name="Schmutz J."/>
            <person name="Myers R.M."/>
            <person name="Cox D.R."/>
            <person name="Huang X."/>
            <person name="McPherson J.D."/>
            <person name="Mardis E.R."/>
            <person name="Clifton S.W."/>
            <person name="Warren W.C."/>
            <person name="Chinwalla A.T."/>
            <person name="Eddy S.R."/>
            <person name="Marra M.A."/>
            <person name="Ovcharenko I."/>
            <person name="Furey T.S."/>
            <person name="Miller W."/>
            <person name="Eichler E.E."/>
            <person name="Bork P."/>
            <person name="Suyama M."/>
            <person name="Torrents D."/>
            <person name="Waterston R.H."/>
            <person name="Wilson R.K."/>
        </authorList>
    </citation>
    <scope>NUCLEOTIDE SEQUENCE [LARGE SCALE GENOMIC DNA]</scope>
</reference>
<reference key="4">
    <citation type="submission" date="2005-07" db="EMBL/GenBank/DDBJ databases">
        <authorList>
            <person name="Mural R.J."/>
            <person name="Istrail S."/>
            <person name="Sutton G.G."/>
            <person name="Florea L."/>
            <person name="Halpern A.L."/>
            <person name="Mobarry C.M."/>
            <person name="Lippert R."/>
            <person name="Walenz B."/>
            <person name="Shatkay H."/>
            <person name="Dew I."/>
            <person name="Miller J.R."/>
            <person name="Flanigan M.J."/>
            <person name="Edwards N.J."/>
            <person name="Bolanos R."/>
            <person name="Fasulo D."/>
            <person name="Halldorsson B.V."/>
            <person name="Hannenhalli S."/>
            <person name="Turner R."/>
            <person name="Yooseph S."/>
            <person name="Lu F."/>
            <person name="Nusskern D.R."/>
            <person name="Shue B.C."/>
            <person name="Zheng X.H."/>
            <person name="Zhong F."/>
            <person name="Delcher A.L."/>
            <person name="Huson D.H."/>
            <person name="Kravitz S.A."/>
            <person name="Mouchard L."/>
            <person name="Reinert K."/>
            <person name="Remington K.A."/>
            <person name="Clark A.G."/>
            <person name="Waterman M.S."/>
            <person name="Eichler E.E."/>
            <person name="Adams M.D."/>
            <person name="Hunkapiller M.W."/>
            <person name="Myers E.W."/>
            <person name="Venter J.C."/>
        </authorList>
    </citation>
    <scope>NUCLEOTIDE SEQUENCE [LARGE SCALE GENOMIC DNA]</scope>
</reference>
<reference key="5">
    <citation type="journal article" date="2004" name="Genome Res.">
        <title>The status, quality, and expansion of the NIH full-length cDNA project: the Mammalian Gene Collection (MGC).</title>
        <authorList>
            <consortium name="The MGC Project Team"/>
        </authorList>
    </citation>
    <scope>NUCLEOTIDE SEQUENCE [LARGE SCALE MRNA] (ISOFORM 2)</scope>
    <source>
        <tissue>Skin</tissue>
    </source>
</reference>
<reference key="6">
    <citation type="journal article" date="2001" name="FEBS Lett.">
        <title>HERC3 binding to and regulation by ubiquitin.</title>
        <authorList>
            <person name="Cruz C."/>
            <person name="Ventura F."/>
            <person name="Bartrons R."/>
            <person name="Rosa J.L."/>
        </authorList>
    </citation>
    <scope>CHARACTERIZATION</scope>
</reference>
<proteinExistence type="evidence at protein level"/>
<comment type="function">
    <text evidence="1">E3 ubiquitin-protein ligase which accepts ubiquitin from an E2 ubiquitin-conjugating enzyme in the form of a thioester and then directly transfers the ubiquitin to targeted substrates.</text>
</comment>
<comment type="catalytic activity">
    <reaction>
        <text>S-ubiquitinyl-[E2 ubiquitin-conjugating enzyme]-L-cysteine + [acceptor protein]-L-lysine = [E2 ubiquitin-conjugating enzyme]-L-cysteine + N(6)-ubiquitinyl-[acceptor protein]-L-lysine.</text>
        <dbReference type="EC" id="2.3.2.26"/>
    </reaction>
</comment>
<comment type="pathway">
    <text>Protein modification; protein ubiquitination.</text>
</comment>
<comment type="interaction">
    <interactant intactId="EBI-3906578">
        <id>Q15034</id>
    </interactant>
    <interactant intactId="EBI-3918342">
        <id>Q9NYL5</id>
        <label>CYP39A1</label>
    </interactant>
    <organismsDiffer>false</organismsDiffer>
    <experiments>3</experiments>
</comment>
<comment type="interaction">
    <interactant intactId="EBI-3906578">
        <id>Q15034</id>
    </interactant>
    <interactant intactId="EBI-353254">
        <id>P62750</id>
        <label>RPL23A</label>
    </interactant>
    <organismsDiffer>false</organismsDiffer>
    <experiments>8</experiments>
</comment>
<comment type="interaction">
    <interactant intactId="EBI-3906578">
        <id>Q15034</id>
    </interactant>
    <interactant intactId="EBI-21886964">
        <id>Q9BWV7</id>
        <label>TTLL2</label>
    </interactant>
    <organismsDiffer>false</organismsDiffer>
    <experiments>2</experiments>
</comment>
<comment type="subcellular location">
    <subcellularLocation>
        <location>Cytoplasm</location>
    </subcellularLocation>
    <subcellularLocation>
        <location>Cytoplasmic vesicle</location>
    </subcellularLocation>
    <text>Also found in vesicular-like structures.</text>
</comment>
<comment type="alternative products">
    <event type="alternative splicing"/>
    <isoform>
        <id>Q15034-1</id>
        <name>1</name>
        <sequence type="displayed"/>
    </isoform>
    <isoform>
        <id>Q15034-2</id>
        <name>2</name>
        <sequence type="described" ref="VSP_056343 VSP_056344"/>
    </isoform>
</comment>
<comment type="PTM">
    <text>Ubiquitinated; which promotes degradation by the proteasome.</text>
</comment>
<comment type="sequence caution" evidence="4">
    <conflict type="erroneous initiation">
        <sequence resource="EMBL-CDS" id="BAA04945"/>
    </conflict>
</comment>
<protein>
    <recommendedName>
        <fullName>Probable E3 ubiquitin-protein ligase HERC3</fullName>
        <ecNumber>2.3.2.26</ecNumber>
    </recommendedName>
    <alternativeName>
        <fullName>HECT domain and RCC1-like domain-containing protein 3</fullName>
    </alternativeName>
    <alternativeName>
        <fullName>HECT-type E3 ubiquitin transferase HERC3</fullName>
    </alternativeName>
</protein>
<keyword id="KW-0025">Alternative splicing</keyword>
<keyword id="KW-0963">Cytoplasm</keyword>
<keyword id="KW-0968">Cytoplasmic vesicle</keyword>
<keyword id="KW-1267">Proteomics identification</keyword>
<keyword id="KW-1185">Reference proteome</keyword>
<keyword id="KW-0677">Repeat</keyword>
<keyword id="KW-0808">Transferase</keyword>
<keyword id="KW-0832">Ubl conjugation</keyword>
<keyword id="KW-0833">Ubl conjugation pathway</keyword>
<dbReference type="EC" id="2.3.2.26"/>
<dbReference type="EMBL" id="D25215">
    <property type="protein sequence ID" value="BAA04945.2"/>
    <property type="status" value="ALT_INIT"/>
    <property type="molecule type" value="mRNA"/>
</dbReference>
<dbReference type="EMBL" id="AK289990">
    <property type="protein sequence ID" value="BAF82679.1"/>
    <property type="molecule type" value="mRNA"/>
</dbReference>
<dbReference type="EMBL" id="AC083829">
    <property type="status" value="NOT_ANNOTATED_CDS"/>
    <property type="molecule type" value="Genomic_DNA"/>
</dbReference>
<dbReference type="EMBL" id="AC098582">
    <property type="status" value="NOT_ANNOTATED_CDS"/>
    <property type="molecule type" value="Genomic_DNA"/>
</dbReference>
<dbReference type="EMBL" id="AC108065">
    <property type="status" value="NOT_ANNOTATED_CDS"/>
    <property type="molecule type" value="Genomic_DNA"/>
</dbReference>
<dbReference type="EMBL" id="CH471057">
    <property type="protein sequence ID" value="EAX06024.1"/>
    <property type="molecule type" value="Genomic_DNA"/>
</dbReference>
<dbReference type="EMBL" id="BC038960">
    <property type="protein sequence ID" value="AAH38960.1"/>
    <property type="molecule type" value="mRNA"/>
</dbReference>
<dbReference type="CCDS" id="CCDS34028.1">
    <molecule id="Q15034-1"/>
</dbReference>
<dbReference type="CCDS" id="CCDS82939.1">
    <molecule id="Q15034-2"/>
</dbReference>
<dbReference type="RefSeq" id="NP_001258531.1">
    <property type="nucleotide sequence ID" value="NM_001271602.1"/>
</dbReference>
<dbReference type="RefSeq" id="NP_001305434.1">
    <molecule id="Q15034-2"/>
    <property type="nucleotide sequence ID" value="NM_001318505.2"/>
</dbReference>
<dbReference type="RefSeq" id="NP_055421.1">
    <molecule id="Q15034-1"/>
    <property type="nucleotide sequence ID" value="NM_014606.3"/>
</dbReference>
<dbReference type="RefSeq" id="XP_005263384.1">
    <property type="nucleotide sequence ID" value="XM_005263327.3"/>
</dbReference>
<dbReference type="SMR" id="Q15034"/>
<dbReference type="BioGRID" id="114430">
    <property type="interactions" value="64"/>
</dbReference>
<dbReference type="FunCoup" id="Q15034">
    <property type="interactions" value="1657"/>
</dbReference>
<dbReference type="IntAct" id="Q15034">
    <property type="interactions" value="26"/>
</dbReference>
<dbReference type="MINT" id="Q15034"/>
<dbReference type="STRING" id="9606.ENSP00000385684"/>
<dbReference type="iPTMnet" id="Q15034"/>
<dbReference type="PhosphoSitePlus" id="Q15034"/>
<dbReference type="BioMuta" id="HERC3"/>
<dbReference type="DMDM" id="2495699"/>
<dbReference type="jPOST" id="Q15034"/>
<dbReference type="MassIVE" id="Q15034"/>
<dbReference type="PaxDb" id="9606-ENSP00000385684"/>
<dbReference type="PeptideAtlas" id="Q15034"/>
<dbReference type="ProteomicsDB" id="60383">
    <molecule id="Q15034-1"/>
</dbReference>
<dbReference type="ProteomicsDB" id="71073"/>
<dbReference type="Antibodypedia" id="25635">
    <property type="antibodies" value="230 antibodies from 25 providers"/>
</dbReference>
<dbReference type="DNASU" id="8916"/>
<dbReference type="Ensembl" id="ENST00000402738.6">
    <molecule id="Q15034-1"/>
    <property type="protein sequence ID" value="ENSP00000385684.1"/>
    <property type="gene ID" value="ENSG00000138641.19"/>
</dbReference>
<dbReference type="Ensembl" id="ENST00000407637.5">
    <molecule id="Q15034-2"/>
    <property type="protein sequence ID" value="ENSP00000384005.1"/>
    <property type="gene ID" value="ENSG00000138641.19"/>
</dbReference>
<dbReference type="GeneID" id="8916"/>
<dbReference type="KEGG" id="hsa:8916"/>
<dbReference type="MANE-Select" id="ENST00000402738.6">
    <property type="protein sequence ID" value="ENSP00000385684.1"/>
    <property type="RefSeq nucleotide sequence ID" value="NM_014606.3"/>
    <property type="RefSeq protein sequence ID" value="NP_055421.1"/>
</dbReference>
<dbReference type="UCSC" id="uc003hrv.5">
    <molecule id="Q15034-1"/>
    <property type="organism name" value="human"/>
</dbReference>
<dbReference type="AGR" id="HGNC:4876"/>
<dbReference type="CTD" id="8916"/>
<dbReference type="DisGeNET" id="8916"/>
<dbReference type="GeneCards" id="HERC3"/>
<dbReference type="HGNC" id="HGNC:4876">
    <property type="gene designation" value="HERC3"/>
</dbReference>
<dbReference type="HPA" id="ENSG00000138641">
    <property type="expression patterns" value="Tissue enhanced (retina)"/>
</dbReference>
<dbReference type="MIM" id="605200">
    <property type="type" value="gene"/>
</dbReference>
<dbReference type="neXtProt" id="NX_Q15034"/>
<dbReference type="OpenTargets" id="ENSG00000138641"/>
<dbReference type="PharmGKB" id="PA29251"/>
<dbReference type="VEuPathDB" id="HostDB:ENSG00000138641"/>
<dbReference type="eggNOG" id="KOG0941">
    <property type="taxonomic scope" value="Eukaryota"/>
</dbReference>
<dbReference type="GeneTree" id="ENSGT00940000158189"/>
<dbReference type="HOGENOM" id="CLU_002173_5_3_1"/>
<dbReference type="InParanoid" id="Q15034"/>
<dbReference type="OMA" id="FVLCSEY"/>
<dbReference type="OrthoDB" id="8068875at2759"/>
<dbReference type="PAN-GO" id="Q15034">
    <property type="GO annotations" value="5 GO annotations based on evolutionary models"/>
</dbReference>
<dbReference type="PhylomeDB" id="Q15034"/>
<dbReference type="TreeFam" id="TF315189"/>
<dbReference type="PathwayCommons" id="Q15034"/>
<dbReference type="Reactome" id="R-HSA-983168">
    <property type="pathway name" value="Antigen processing: Ubiquitination &amp; Proteasome degradation"/>
</dbReference>
<dbReference type="SignaLink" id="Q15034"/>
<dbReference type="SIGNOR" id="Q15034"/>
<dbReference type="UniPathway" id="UPA00143"/>
<dbReference type="BioGRID-ORCS" id="8916">
    <property type="hits" value="9 hits in 1197 CRISPR screens"/>
</dbReference>
<dbReference type="ChiTaRS" id="HERC3">
    <property type="organism name" value="human"/>
</dbReference>
<dbReference type="GenomeRNAi" id="8916"/>
<dbReference type="Pharos" id="Q15034">
    <property type="development level" value="Tbio"/>
</dbReference>
<dbReference type="PRO" id="PR:Q15034"/>
<dbReference type="Proteomes" id="UP000005640">
    <property type="component" value="Chromosome 4"/>
</dbReference>
<dbReference type="RNAct" id="Q15034">
    <property type="molecule type" value="protein"/>
</dbReference>
<dbReference type="Bgee" id="ENSG00000138641">
    <property type="expression patterns" value="Expressed in sural nerve and 111 other cell types or tissues"/>
</dbReference>
<dbReference type="ExpressionAtlas" id="Q15034">
    <property type="expression patterns" value="baseline and differential"/>
</dbReference>
<dbReference type="GO" id="GO:0005737">
    <property type="term" value="C:cytoplasm"/>
    <property type="evidence" value="ECO:0000318"/>
    <property type="project" value="GO_Central"/>
</dbReference>
<dbReference type="GO" id="GO:0031410">
    <property type="term" value="C:cytoplasmic vesicle"/>
    <property type="evidence" value="ECO:0007669"/>
    <property type="project" value="UniProtKB-KW"/>
</dbReference>
<dbReference type="GO" id="GO:0061630">
    <property type="term" value="F:ubiquitin protein ligase activity"/>
    <property type="evidence" value="ECO:0000318"/>
    <property type="project" value="GO_Central"/>
</dbReference>
<dbReference type="GO" id="GO:0016567">
    <property type="term" value="P:protein ubiquitination"/>
    <property type="evidence" value="ECO:0000318"/>
    <property type="project" value="GO_Central"/>
</dbReference>
<dbReference type="GO" id="GO:0006511">
    <property type="term" value="P:ubiquitin-dependent protein catabolic process"/>
    <property type="evidence" value="ECO:0000318"/>
    <property type="project" value="GO_Central"/>
</dbReference>
<dbReference type="CDD" id="cd00078">
    <property type="entry name" value="HECTc"/>
    <property type="match status" value="1"/>
</dbReference>
<dbReference type="FunFam" id="2.130.10.30:FF:000012">
    <property type="entry name" value="probable E3 ubiquitin-protein ligase HERC3 isoform X1"/>
    <property type="match status" value="1"/>
</dbReference>
<dbReference type="FunFam" id="2.130.10.30:FF:000018">
    <property type="entry name" value="probable E3 ubiquitin-protein ligase HERC3 isoform X1"/>
    <property type="match status" value="1"/>
</dbReference>
<dbReference type="FunFam" id="3.30.2160.10:FF:000004">
    <property type="entry name" value="probable E3 ubiquitin-protein ligase HERC4 isoform X1"/>
    <property type="match status" value="1"/>
</dbReference>
<dbReference type="FunFam" id="3.30.2410.10:FF:000003">
    <property type="entry name" value="probable E3 ubiquitin-protein ligase HERC4 isoform X1"/>
    <property type="match status" value="1"/>
</dbReference>
<dbReference type="FunFam" id="3.90.1750.10:FF:000010">
    <property type="entry name" value="probable E3 ubiquitin-protein ligase HERC4 isoform X1"/>
    <property type="match status" value="1"/>
</dbReference>
<dbReference type="Gene3D" id="3.30.2160.10">
    <property type="entry name" value="Hect, E3 ligase catalytic domain"/>
    <property type="match status" value="1"/>
</dbReference>
<dbReference type="Gene3D" id="3.30.2410.10">
    <property type="entry name" value="Hect, E3 ligase catalytic domain"/>
    <property type="match status" value="1"/>
</dbReference>
<dbReference type="Gene3D" id="3.90.1750.10">
    <property type="entry name" value="Hect, E3 ligase catalytic domains"/>
    <property type="match status" value="1"/>
</dbReference>
<dbReference type="Gene3D" id="2.130.10.30">
    <property type="entry name" value="Regulator of chromosome condensation 1/beta-lactamase-inhibitor protein II"/>
    <property type="match status" value="2"/>
</dbReference>
<dbReference type="InterPro" id="IPR000569">
    <property type="entry name" value="HECT_dom"/>
</dbReference>
<dbReference type="InterPro" id="IPR035983">
    <property type="entry name" value="Hect_E3_ubiquitin_ligase"/>
</dbReference>
<dbReference type="InterPro" id="IPR009091">
    <property type="entry name" value="RCC1/BLIP-II"/>
</dbReference>
<dbReference type="InterPro" id="IPR000408">
    <property type="entry name" value="Reg_chr_condens"/>
</dbReference>
<dbReference type="InterPro" id="IPR051709">
    <property type="entry name" value="Ub-ligase/GTPase-reg"/>
</dbReference>
<dbReference type="PANTHER" id="PTHR45622:SF70">
    <property type="entry name" value="SECRETION-REGULATING GUANINE NUCLEOTIDE EXCHANGE FACTOR"/>
    <property type="match status" value="1"/>
</dbReference>
<dbReference type="PANTHER" id="PTHR45622">
    <property type="entry name" value="UBIQUITIN-PROTEIN LIGASE E3A-RELATED"/>
    <property type="match status" value="1"/>
</dbReference>
<dbReference type="Pfam" id="PF00632">
    <property type="entry name" value="HECT"/>
    <property type="match status" value="1"/>
</dbReference>
<dbReference type="Pfam" id="PF25390">
    <property type="entry name" value="WD40_RLD"/>
    <property type="match status" value="1"/>
</dbReference>
<dbReference type="PRINTS" id="PR00633">
    <property type="entry name" value="RCCNDNSATION"/>
</dbReference>
<dbReference type="SMART" id="SM00119">
    <property type="entry name" value="HECTc"/>
    <property type="match status" value="1"/>
</dbReference>
<dbReference type="SUPFAM" id="SSF56204">
    <property type="entry name" value="Hect, E3 ligase catalytic domain"/>
    <property type="match status" value="1"/>
</dbReference>
<dbReference type="SUPFAM" id="SSF50985">
    <property type="entry name" value="RCC1/BLIP-II"/>
    <property type="match status" value="1"/>
</dbReference>
<dbReference type="PROSITE" id="PS50237">
    <property type="entry name" value="HECT"/>
    <property type="match status" value="1"/>
</dbReference>
<dbReference type="PROSITE" id="PS00626">
    <property type="entry name" value="RCC1_2"/>
    <property type="match status" value="3"/>
</dbReference>
<dbReference type="PROSITE" id="PS50012">
    <property type="entry name" value="RCC1_3"/>
    <property type="match status" value="7"/>
</dbReference>
<evidence type="ECO:0000250" key="1"/>
<evidence type="ECO:0000255" key="2">
    <source>
        <dbReference type="PROSITE-ProRule" id="PRU00104"/>
    </source>
</evidence>
<evidence type="ECO:0000303" key="3">
    <source>
    </source>
</evidence>
<evidence type="ECO:0000305" key="4"/>
<accession>Q15034</accession>
<accession>A8K1S5</accession>
<accession>Q8IXX3</accession>
<gene>
    <name type="primary">HERC3</name>
    <name type="synonym">KIAA0032</name>
</gene>
<sequence>MLCWGYWSLGQPGISTNLQGIVAEPQVCGFISDRSVKEVACGGNHSVFLLEDGEVYTCGLNTKGQLGHEREGNKPEQIGALADQHIIHVACGESHSLALSDRGQLFSWGAGSDGQLGLMTTEDSVAVPRLIQKLNQQTILQVSCGNWHCLALAADGQFFTWGKNSHGQLGLGKEFPSQASPQRVRSLEGIPLAQVAAGGAHSFALSLSGAVFGWGMNNAGQLGLSDEKDRESPCHVKLLRTQKVVYISCGEEHTAVLTKSGGVFTFGAGSCGQLGHDSMNDEVNPRRVLELMGSEVTQIACGRQHTLAFVPSSGLIYAFGCGARGQLGTGHTCNVKCPSPVKGYWAAHSGQLSARADRFKYHIVKQIFSGGDQTFVLCSKYENYSPAVDFRTMNQAHYTSLINDETIAVWRQKLSEHNNANTINGVVQILSSAACWNGSFLEKKIDEHFKTSPKIPGIDLNSTRVLFEKLMNSQHSMILEQILNSFESCLIPQLSSSPPDVEAMRIYLILPEFPLLQDSKYYITLTIPLAMAILRLDTNPSKVLDNWWSQVCPKYFMKLVNLYKGAVLYLLRGRKTFLIPVLFNNYITAALKLLEKLYKVNLKVKHVEYDTFYIPEISNLVDIQEDYLMWFLHQAGMKARPSIIQDTVTLCSYPFIFDAQAKTKMLQTDAELQMQVAVNGANLQNVFMLLTLEPLLARSPFLVLHVRRNNLVGDALRELSIHSDIDLKKPLKVIFDGEEAVDAGGVTKEFFLLLLKELLNPIYGMFTYYQDSNLLWFSDTCFVEHNWFHLIGITCGLAIYNSTVVDLHFPLALYKKLLNVKPGLEDLKELSPTEGRSLQELLDYPGEDVEETFCLNFTICRESYGVIEQKKLIPGGDNVTVCKDNRQEFVDAYVNYVFQISVHEWYTAFSSGFLKVCGGKVLELFQPSELRAMMVGNSNYNWEELEETAIYKGDYSATHPTVKLFWETFHEFPLEKKKKFLLFLTGSDRIPIYGMASLQIVIQSTASGEEYLPVAHTCYNLLDLPKYSSKEILSARLTQALDNYEGFSLA</sequence>
<name>HERC3_HUMAN</name>
<organism>
    <name type="scientific">Homo sapiens</name>
    <name type="common">Human</name>
    <dbReference type="NCBI Taxonomy" id="9606"/>
    <lineage>
        <taxon>Eukaryota</taxon>
        <taxon>Metazoa</taxon>
        <taxon>Chordata</taxon>
        <taxon>Craniata</taxon>
        <taxon>Vertebrata</taxon>
        <taxon>Euteleostomi</taxon>
        <taxon>Mammalia</taxon>
        <taxon>Eutheria</taxon>
        <taxon>Euarchontoglires</taxon>
        <taxon>Primates</taxon>
        <taxon>Haplorrhini</taxon>
        <taxon>Catarrhini</taxon>
        <taxon>Hominidae</taxon>
        <taxon>Homo</taxon>
    </lineage>
</organism>
<feature type="chain" id="PRO_0000206651" description="Probable E3 ubiquitin-protein ligase HERC3">
    <location>
        <begin position="1"/>
        <end position="1050"/>
    </location>
</feature>
<feature type="repeat" description="RCC1 1">
    <location>
        <begin position="1"/>
        <end position="51"/>
    </location>
</feature>
<feature type="repeat" description="RCC1 2">
    <location>
        <begin position="52"/>
        <end position="101"/>
    </location>
</feature>
<feature type="repeat" description="RCC1 3">
    <location>
        <begin position="102"/>
        <end position="154"/>
    </location>
</feature>
<feature type="repeat" description="RCC1 4">
    <location>
        <begin position="156"/>
        <end position="207"/>
    </location>
</feature>
<feature type="repeat" description="RCC1 5">
    <location>
        <begin position="208"/>
        <end position="259"/>
    </location>
</feature>
<feature type="repeat" description="RCC1 6">
    <location>
        <begin position="261"/>
        <end position="311"/>
    </location>
</feature>
<feature type="repeat" description="RCC1 7">
    <location>
        <begin position="313"/>
        <end position="366"/>
    </location>
</feature>
<feature type="domain" description="HECT" evidence="2">
    <location>
        <begin position="951"/>
        <end position="1050"/>
    </location>
</feature>
<feature type="active site" description="Glycyl thioester intermediate" evidence="2">
    <location>
        <position position="1018"/>
    </location>
</feature>
<feature type="splice variant" id="VSP_056343" description="In isoform 2." evidence="3">
    <original>DRFKYHIVKQIF</original>
    <variation>GKNDCLWNLKVF</variation>
    <location>
        <begin position="357"/>
        <end position="368"/>
    </location>
</feature>
<feature type="splice variant" id="VSP_056344" description="In isoform 2." evidence="3">
    <location>
        <begin position="369"/>
        <end position="1050"/>
    </location>
</feature>
<feature type="sequence variant" id="VAR_051729" description="In dbSNP:rs1804080.">
    <original>E</original>
    <variation>Q</variation>
    <location>
        <position position="946"/>
    </location>
</feature>